<accession>C5CNB2</accession>
<keyword id="KW-0066">ATP synthesis</keyword>
<keyword id="KW-0997">Cell inner membrane</keyword>
<keyword id="KW-1003">Cell membrane</keyword>
<keyword id="KW-0139">CF(1)</keyword>
<keyword id="KW-0375">Hydrogen ion transport</keyword>
<keyword id="KW-0406">Ion transport</keyword>
<keyword id="KW-0472">Membrane</keyword>
<keyword id="KW-0813">Transport</keyword>
<protein>
    <recommendedName>
        <fullName evidence="1">ATP synthase gamma chain</fullName>
    </recommendedName>
    <alternativeName>
        <fullName evidence="1">ATP synthase F1 sector gamma subunit</fullName>
    </alternativeName>
    <alternativeName>
        <fullName evidence="1">F-ATPase gamma subunit</fullName>
    </alternativeName>
</protein>
<feature type="chain" id="PRO_1000213050" description="ATP synthase gamma chain">
    <location>
        <begin position="1"/>
        <end position="291"/>
    </location>
</feature>
<gene>
    <name evidence="1" type="primary">atpG</name>
    <name type="ordered locus">Vapar_4871</name>
</gene>
<organism>
    <name type="scientific">Variovorax paradoxus (strain S110)</name>
    <dbReference type="NCBI Taxonomy" id="543728"/>
    <lineage>
        <taxon>Bacteria</taxon>
        <taxon>Pseudomonadati</taxon>
        <taxon>Pseudomonadota</taxon>
        <taxon>Betaproteobacteria</taxon>
        <taxon>Burkholderiales</taxon>
        <taxon>Comamonadaceae</taxon>
        <taxon>Variovorax</taxon>
    </lineage>
</organism>
<evidence type="ECO:0000255" key="1">
    <source>
        <dbReference type="HAMAP-Rule" id="MF_00815"/>
    </source>
</evidence>
<comment type="function">
    <text evidence="1">Produces ATP from ADP in the presence of a proton gradient across the membrane. The gamma chain is believed to be important in regulating ATPase activity and the flow of protons through the CF(0) complex.</text>
</comment>
<comment type="subunit">
    <text evidence="1">F-type ATPases have 2 components, CF(1) - the catalytic core - and CF(0) - the membrane proton channel. CF(1) has five subunits: alpha(3), beta(3), gamma(1), delta(1), epsilon(1). CF(0) has three main subunits: a, b and c.</text>
</comment>
<comment type="subcellular location">
    <subcellularLocation>
        <location evidence="1">Cell inner membrane</location>
        <topology evidence="1">Peripheral membrane protein</topology>
    </subcellularLocation>
</comment>
<comment type="similarity">
    <text evidence="1">Belongs to the ATPase gamma chain family.</text>
</comment>
<proteinExistence type="inferred from homology"/>
<sequence>MAAGKEIRGKIKSVENTKKITKAMEMVSVSKMRKAQERMRAARPYSEKIRNIAANLGKANPEYTHAFMKKNEAKAIGFIIVTSDKGLCGGLNTNLLRAVTGKLREAQSAGIAIESVAIGSKGLGFLNRIGARVVAHVTHLGDTPHLDKLIGPVKTLLDAYAEGKLSAVYLCYTKFINTIKQEPLVEQLLPLAADSLQVEAGQHSWDYIYEPDAQSVIDELLVRYVESLVYQAVAENMASEHSARMVAMKAATDNAGNVINELKLVYNKTRQAGITKELSEIVSGAAAAAGV</sequence>
<reference key="1">
    <citation type="journal article" date="2011" name="J. Bacteriol.">
        <title>Complete genome sequence of the metabolically versatile plant growth-promoting endophyte, Variovorax paradoxus S110.</title>
        <authorList>
            <person name="Han J.I."/>
            <person name="Choi H.K."/>
            <person name="Lee S.W."/>
            <person name="Orwin P.M."/>
            <person name="Kim J."/>
            <person name="Laroe S.L."/>
            <person name="Kim T.G."/>
            <person name="O'Neil J."/>
            <person name="Leadbetter J.R."/>
            <person name="Lee S.Y."/>
            <person name="Hur C.G."/>
            <person name="Spain J.C."/>
            <person name="Ovchinnikova G."/>
            <person name="Goodwin L."/>
            <person name="Han C."/>
        </authorList>
    </citation>
    <scope>NUCLEOTIDE SEQUENCE [LARGE SCALE GENOMIC DNA]</scope>
    <source>
        <strain>S110</strain>
    </source>
</reference>
<name>ATPG_VARPS</name>
<dbReference type="EMBL" id="CP001635">
    <property type="protein sequence ID" value="ACS21475.1"/>
    <property type="molecule type" value="Genomic_DNA"/>
</dbReference>
<dbReference type="SMR" id="C5CNB2"/>
<dbReference type="STRING" id="543728.Vapar_4871"/>
<dbReference type="KEGG" id="vap:Vapar_4871"/>
<dbReference type="eggNOG" id="COG0224">
    <property type="taxonomic scope" value="Bacteria"/>
</dbReference>
<dbReference type="HOGENOM" id="CLU_050669_0_1_4"/>
<dbReference type="OrthoDB" id="9812769at2"/>
<dbReference type="GO" id="GO:0005886">
    <property type="term" value="C:plasma membrane"/>
    <property type="evidence" value="ECO:0007669"/>
    <property type="project" value="UniProtKB-SubCell"/>
</dbReference>
<dbReference type="GO" id="GO:0045259">
    <property type="term" value="C:proton-transporting ATP synthase complex"/>
    <property type="evidence" value="ECO:0007669"/>
    <property type="project" value="UniProtKB-KW"/>
</dbReference>
<dbReference type="GO" id="GO:0005524">
    <property type="term" value="F:ATP binding"/>
    <property type="evidence" value="ECO:0007669"/>
    <property type="project" value="UniProtKB-UniRule"/>
</dbReference>
<dbReference type="GO" id="GO:0046933">
    <property type="term" value="F:proton-transporting ATP synthase activity, rotational mechanism"/>
    <property type="evidence" value="ECO:0007669"/>
    <property type="project" value="UniProtKB-UniRule"/>
</dbReference>
<dbReference type="GO" id="GO:0042777">
    <property type="term" value="P:proton motive force-driven plasma membrane ATP synthesis"/>
    <property type="evidence" value="ECO:0007669"/>
    <property type="project" value="UniProtKB-UniRule"/>
</dbReference>
<dbReference type="CDD" id="cd12151">
    <property type="entry name" value="F1-ATPase_gamma"/>
    <property type="match status" value="1"/>
</dbReference>
<dbReference type="FunFam" id="1.10.287.80:FF:000005">
    <property type="entry name" value="ATP synthase gamma chain"/>
    <property type="match status" value="1"/>
</dbReference>
<dbReference type="Gene3D" id="3.40.1380.10">
    <property type="match status" value="1"/>
</dbReference>
<dbReference type="Gene3D" id="1.10.287.80">
    <property type="entry name" value="ATP synthase, gamma subunit, helix hairpin domain"/>
    <property type="match status" value="1"/>
</dbReference>
<dbReference type="HAMAP" id="MF_00815">
    <property type="entry name" value="ATP_synth_gamma_bact"/>
    <property type="match status" value="1"/>
</dbReference>
<dbReference type="InterPro" id="IPR035968">
    <property type="entry name" value="ATP_synth_F1_ATPase_gsu"/>
</dbReference>
<dbReference type="InterPro" id="IPR000131">
    <property type="entry name" value="ATP_synth_F1_gsu"/>
</dbReference>
<dbReference type="InterPro" id="IPR023632">
    <property type="entry name" value="ATP_synth_F1_gsu_CS"/>
</dbReference>
<dbReference type="NCBIfam" id="TIGR01146">
    <property type="entry name" value="ATPsyn_F1gamma"/>
    <property type="match status" value="1"/>
</dbReference>
<dbReference type="NCBIfam" id="NF004144">
    <property type="entry name" value="PRK05621.1-1"/>
    <property type="match status" value="1"/>
</dbReference>
<dbReference type="PANTHER" id="PTHR11693">
    <property type="entry name" value="ATP SYNTHASE GAMMA CHAIN"/>
    <property type="match status" value="1"/>
</dbReference>
<dbReference type="PANTHER" id="PTHR11693:SF22">
    <property type="entry name" value="ATP SYNTHASE SUBUNIT GAMMA, MITOCHONDRIAL"/>
    <property type="match status" value="1"/>
</dbReference>
<dbReference type="Pfam" id="PF00231">
    <property type="entry name" value="ATP-synt"/>
    <property type="match status" value="1"/>
</dbReference>
<dbReference type="PRINTS" id="PR00126">
    <property type="entry name" value="ATPASEGAMMA"/>
</dbReference>
<dbReference type="SUPFAM" id="SSF52943">
    <property type="entry name" value="ATP synthase (F1-ATPase), gamma subunit"/>
    <property type="match status" value="1"/>
</dbReference>
<dbReference type="PROSITE" id="PS00153">
    <property type="entry name" value="ATPASE_GAMMA"/>
    <property type="match status" value="1"/>
</dbReference>